<evidence type="ECO:0000255" key="1">
    <source>
        <dbReference type="HAMAP-Rule" id="MF_00141"/>
    </source>
</evidence>
<accession>P64040</accession>
<accession>Q8DXZ9</accession>
<accession>Q8E3L8</accession>
<sequence length="186" mass="20685">MIEASKLKAGMTFETADGKLIRVLEASHHKPGKGNTIMRMKLRDVRTGSTFDTSYRPEEKFEQAIIETVPAQYLYKMDDTAYFMNNETYDQYEIPTVNIENELLYILENSEVKIQFYGTEVIGVQIPTTVELTVAETQPSIKGATVTGSGKPATMETGLVVNVPDFIEAGQKLVINTAEGTYVSRA</sequence>
<proteinExistence type="inferred from homology"/>
<dbReference type="EMBL" id="AL766852">
    <property type="protein sequence ID" value="CAD47398.1"/>
    <property type="molecule type" value="Genomic_DNA"/>
</dbReference>
<dbReference type="RefSeq" id="WP_000568636.1">
    <property type="nucleotide sequence ID" value="NC_004368.1"/>
</dbReference>
<dbReference type="SMR" id="P64040"/>
<dbReference type="GeneID" id="66886541"/>
<dbReference type="KEGG" id="san:gbs1739"/>
<dbReference type="eggNOG" id="COG0231">
    <property type="taxonomic scope" value="Bacteria"/>
</dbReference>
<dbReference type="HOGENOM" id="CLU_074944_3_0_9"/>
<dbReference type="UniPathway" id="UPA00345"/>
<dbReference type="Proteomes" id="UP000000823">
    <property type="component" value="Chromosome"/>
</dbReference>
<dbReference type="GO" id="GO:0005737">
    <property type="term" value="C:cytoplasm"/>
    <property type="evidence" value="ECO:0007669"/>
    <property type="project" value="UniProtKB-SubCell"/>
</dbReference>
<dbReference type="GO" id="GO:0003746">
    <property type="term" value="F:translation elongation factor activity"/>
    <property type="evidence" value="ECO:0007669"/>
    <property type="project" value="UniProtKB-UniRule"/>
</dbReference>
<dbReference type="GO" id="GO:0043043">
    <property type="term" value="P:peptide biosynthetic process"/>
    <property type="evidence" value="ECO:0007669"/>
    <property type="project" value="InterPro"/>
</dbReference>
<dbReference type="CDD" id="cd04470">
    <property type="entry name" value="S1_EF-P_repeat_1"/>
    <property type="match status" value="1"/>
</dbReference>
<dbReference type="CDD" id="cd05794">
    <property type="entry name" value="S1_EF-P_repeat_2"/>
    <property type="match status" value="1"/>
</dbReference>
<dbReference type="FunFam" id="2.30.30.30:FF:000003">
    <property type="entry name" value="Elongation factor P"/>
    <property type="match status" value="1"/>
</dbReference>
<dbReference type="FunFam" id="2.40.50.140:FF:000004">
    <property type="entry name" value="Elongation factor P"/>
    <property type="match status" value="1"/>
</dbReference>
<dbReference type="FunFam" id="2.40.50.140:FF:000009">
    <property type="entry name" value="Elongation factor P"/>
    <property type="match status" value="1"/>
</dbReference>
<dbReference type="Gene3D" id="2.30.30.30">
    <property type="match status" value="1"/>
</dbReference>
<dbReference type="Gene3D" id="2.40.50.140">
    <property type="entry name" value="Nucleic acid-binding proteins"/>
    <property type="match status" value="2"/>
</dbReference>
<dbReference type="HAMAP" id="MF_00141">
    <property type="entry name" value="EF_P"/>
    <property type="match status" value="1"/>
</dbReference>
<dbReference type="InterPro" id="IPR015365">
    <property type="entry name" value="Elong-fact-P_C"/>
</dbReference>
<dbReference type="InterPro" id="IPR012340">
    <property type="entry name" value="NA-bd_OB-fold"/>
</dbReference>
<dbReference type="InterPro" id="IPR014722">
    <property type="entry name" value="Rib_uL2_dom2"/>
</dbReference>
<dbReference type="InterPro" id="IPR020599">
    <property type="entry name" value="Transl_elong_fac_P/YeiP"/>
</dbReference>
<dbReference type="InterPro" id="IPR013185">
    <property type="entry name" value="Transl_elong_KOW-like"/>
</dbReference>
<dbReference type="InterPro" id="IPR001059">
    <property type="entry name" value="Transl_elong_P/YeiP_cen"/>
</dbReference>
<dbReference type="InterPro" id="IPR013852">
    <property type="entry name" value="Transl_elong_P/YeiP_CS"/>
</dbReference>
<dbReference type="InterPro" id="IPR011768">
    <property type="entry name" value="Transl_elongation_fac_P"/>
</dbReference>
<dbReference type="InterPro" id="IPR008991">
    <property type="entry name" value="Translation_prot_SH3-like_sf"/>
</dbReference>
<dbReference type="NCBIfam" id="TIGR00038">
    <property type="entry name" value="efp"/>
    <property type="match status" value="1"/>
</dbReference>
<dbReference type="NCBIfam" id="NF001810">
    <property type="entry name" value="PRK00529.1"/>
    <property type="match status" value="1"/>
</dbReference>
<dbReference type="PANTHER" id="PTHR30053">
    <property type="entry name" value="ELONGATION FACTOR P"/>
    <property type="match status" value="1"/>
</dbReference>
<dbReference type="PANTHER" id="PTHR30053:SF12">
    <property type="entry name" value="ELONGATION FACTOR P (EF-P) FAMILY PROTEIN"/>
    <property type="match status" value="1"/>
</dbReference>
<dbReference type="Pfam" id="PF01132">
    <property type="entry name" value="EFP"/>
    <property type="match status" value="1"/>
</dbReference>
<dbReference type="Pfam" id="PF08207">
    <property type="entry name" value="EFP_N"/>
    <property type="match status" value="1"/>
</dbReference>
<dbReference type="Pfam" id="PF09285">
    <property type="entry name" value="Elong-fact-P_C"/>
    <property type="match status" value="1"/>
</dbReference>
<dbReference type="PIRSF" id="PIRSF005901">
    <property type="entry name" value="EF-P"/>
    <property type="match status" value="1"/>
</dbReference>
<dbReference type="SMART" id="SM01185">
    <property type="entry name" value="EFP"/>
    <property type="match status" value="1"/>
</dbReference>
<dbReference type="SMART" id="SM00841">
    <property type="entry name" value="Elong-fact-P_C"/>
    <property type="match status" value="1"/>
</dbReference>
<dbReference type="SUPFAM" id="SSF50249">
    <property type="entry name" value="Nucleic acid-binding proteins"/>
    <property type="match status" value="2"/>
</dbReference>
<dbReference type="SUPFAM" id="SSF50104">
    <property type="entry name" value="Translation proteins SH3-like domain"/>
    <property type="match status" value="1"/>
</dbReference>
<dbReference type="PROSITE" id="PS01275">
    <property type="entry name" value="EFP"/>
    <property type="match status" value="1"/>
</dbReference>
<reference key="1">
    <citation type="journal article" date="2002" name="Mol. Microbiol.">
        <title>Genome sequence of Streptococcus agalactiae, a pathogen causing invasive neonatal disease.</title>
        <authorList>
            <person name="Glaser P."/>
            <person name="Rusniok C."/>
            <person name="Buchrieser C."/>
            <person name="Chevalier F."/>
            <person name="Frangeul L."/>
            <person name="Msadek T."/>
            <person name="Zouine M."/>
            <person name="Couve E."/>
            <person name="Lalioui L."/>
            <person name="Poyart C."/>
            <person name="Trieu-Cuot P."/>
            <person name="Kunst F."/>
        </authorList>
    </citation>
    <scope>NUCLEOTIDE SEQUENCE [LARGE SCALE GENOMIC DNA]</scope>
    <source>
        <strain>NEM316</strain>
    </source>
</reference>
<feature type="chain" id="PRO_0000094336" description="Elongation factor P">
    <location>
        <begin position="1"/>
        <end position="186"/>
    </location>
</feature>
<organism>
    <name type="scientific">Streptococcus agalactiae serotype III (strain NEM316)</name>
    <dbReference type="NCBI Taxonomy" id="211110"/>
    <lineage>
        <taxon>Bacteria</taxon>
        <taxon>Bacillati</taxon>
        <taxon>Bacillota</taxon>
        <taxon>Bacilli</taxon>
        <taxon>Lactobacillales</taxon>
        <taxon>Streptococcaceae</taxon>
        <taxon>Streptococcus</taxon>
    </lineage>
</organism>
<protein>
    <recommendedName>
        <fullName evidence="1">Elongation factor P</fullName>
        <shortName evidence="1">EF-P</shortName>
    </recommendedName>
</protein>
<comment type="function">
    <text evidence="1">Involved in peptide bond synthesis. Stimulates efficient translation and peptide-bond synthesis on native or reconstituted 70S ribosomes in vitro. Probably functions indirectly by altering the affinity of the ribosome for aminoacyl-tRNA, thus increasing their reactivity as acceptors for peptidyl transferase.</text>
</comment>
<comment type="pathway">
    <text evidence="1">Protein biosynthesis; polypeptide chain elongation.</text>
</comment>
<comment type="subcellular location">
    <subcellularLocation>
        <location evidence="1">Cytoplasm</location>
    </subcellularLocation>
</comment>
<comment type="similarity">
    <text evidence="1">Belongs to the elongation factor P family.</text>
</comment>
<keyword id="KW-0963">Cytoplasm</keyword>
<keyword id="KW-0251">Elongation factor</keyword>
<keyword id="KW-0648">Protein biosynthesis</keyword>
<gene>
    <name evidence="1" type="primary">efp</name>
    <name type="ordered locus">gbs1739</name>
</gene>
<name>EFP_STRA3</name>